<accession>P00625</accession>
<accession>P79836</accession>
<accession>Q92151</accession>
<organism>
    <name type="scientific">Ovophis okinavensis</name>
    <name type="common">Ryukyu Island pit viper</name>
    <name type="synonym">Trimeresurus okinavensis</name>
    <dbReference type="NCBI Taxonomy" id="8769"/>
    <lineage>
        <taxon>Eukaryota</taxon>
        <taxon>Metazoa</taxon>
        <taxon>Chordata</taxon>
        <taxon>Craniata</taxon>
        <taxon>Vertebrata</taxon>
        <taxon>Euteleostomi</taxon>
        <taxon>Lepidosauria</taxon>
        <taxon>Squamata</taxon>
        <taxon>Bifurcata</taxon>
        <taxon>Unidentata</taxon>
        <taxon>Episquamata</taxon>
        <taxon>Toxicofera</taxon>
        <taxon>Serpentes</taxon>
        <taxon>Colubroidea</taxon>
        <taxon>Viperidae</taxon>
        <taxon>Crotalinae</taxon>
        <taxon>Ovophis</taxon>
    </lineage>
</organism>
<proteinExistence type="evidence at protein level"/>
<reference key="1">
    <citation type="journal article" date="1996" name="Gene">
        <title>Accelerated evolution of Trimeresurus okinavensis venom gland phospholipase A2 isozyme-encoding genes.</title>
        <authorList>
            <person name="Nobuhisa I."/>
            <person name="Nakashima K."/>
            <person name="Deshimaru M."/>
            <person name="Ogawa T."/>
            <person name="Shimohigashi Y."/>
            <person name="Fukumaki Y."/>
            <person name="Sakaki Y."/>
            <person name="Hattori S."/>
            <person name="Kihara H."/>
            <person name="Ohno M."/>
        </authorList>
    </citation>
    <scope>NUCLEOTIDE SEQUENCE [GENOMIC DNA / MRNA]</scope>
    <source>
        <tissue>Liver</tissue>
        <tissue>Venom gland</tissue>
    </source>
</reference>
<reference key="2">
    <citation type="journal article" date="1981" name="Hoppe-Seyler's Z. Physiol. Chem.">
        <title>Snake venoms. Purification, some properties and amino acid sequence of a phospholipase A2 (DE-I) from Trimeresurus okinavensis (Hime-habu) venom.</title>
        <authorList>
            <person name="Joubert F.J."/>
            <person name="Haylett T."/>
        </authorList>
    </citation>
    <scope>PROTEIN SEQUENCE OF 17-139</scope>
    <source>
        <tissue>Venom</tissue>
    </source>
</reference>
<reference key="3">
    <citation type="journal article" date="2012" name="Toxicon">
        <title>Cloning and characterization of Trimeresurus gracilis venom phospholipases A(2): comparison with Ovophis okinavensis venom and the systematic implications.</title>
        <authorList>
            <person name="Tsai I.-H."/>
            <person name="Tsai T.-S."/>
            <person name="Wang Y.-M."/>
            <person name="Tu M.-C."/>
            <person name="Chang H.-C."/>
        </authorList>
    </citation>
    <scope>PROTEIN SEQUENCE OF 17-45</scope>
    <scope>FUNCTION</scope>
    <scope>MASS SPECTROMETRY</scope>
    <source>
        <tissue>Venom</tissue>
    </source>
</reference>
<protein>
    <recommendedName>
        <fullName>Acidic phospholipase A2 DE-I</fullName>
        <shortName>svPA2</shortName>
        <ecNumber>3.1.1.4</ecNumber>
    </recommendedName>
    <alternativeName>
        <fullName>Phosphatidylcholine 2-acylhydrolase</fullName>
    </alternativeName>
    <alternativeName>
        <fullName>Phospholipase A2 Ook-E6</fullName>
    </alternativeName>
    <alternativeName>
        <fullName>Phospholipase A2 PLA2-01</fullName>
    </alternativeName>
</protein>
<feature type="signal peptide" evidence="4 5">
    <location>
        <begin position="1"/>
        <end position="16"/>
    </location>
</feature>
<feature type="chain" id="PRO_0000022966" description="Acidic phospholipase A2 DE-I">
    <location>
        <begin position="17"/>
        <end position="139"/>
    </location>
</feature>
<feature type="active site" evidence="1">
    <location>
        <position position="63"/>
    </location>
</feature>
<feature type="active site" evidence="1">
    <location>
        <position position="105"/>
    </location>
</feature>
<feature type="binding site" evidence="1">
    <location>
        <position position="43"/>
    </location>
    <ligand>
        <name>Ca(2+)</name>
        <dbReference type="ChEBI" id="CHEBI:29108"/>
    </ligand>
</feature>
<feature type="binding site" evidence="1">
    <location>
        <position position="45"/>
    </location>
    <ligand>
        <name>Ca(2+)</name>
        <dbReference type="ChEBI" id="CHEBI:29108"/>
    </ligand>
</feature>
<feature type="binding site" evidence="1">
    <location>
        <position position="47"/>
    </location>
    <ligand>
        <name>Ca(2+)</name>
        <dbReference type="ChEBI" id="CHEBI:29108"/>
    </ligand>
</feature>
<feature type="binding site" evidence="1">
    <location>
        <position position="64"/>
    </location>
    <ligand>
        <name>Ca(2+)</name>
        <dbReference type="ChEBI" id="CHEBI:29108"/>
    </ligand>
</feature>
<feature type="disulfide bond" evidence="1">
    <location>
        <begin position="42"/>
        <end position="132"/>
    </location>
</feature>
<feature type="disulfide bond" evidence="1">
    <location>
        <begin position="44"/>
        <end position="60"/>
    </location>
</feature>
<feature type="disulfide bond" evidence="1">
    <location>
        <begin position="59"/>
        <end position="111"/>
    </location>
</feature>
<feature type="disulfide bond" evidence="1">
    <location>
        <begin position="65"/>
        <end position="139"/>
    </location>
</feature>
<feature type="disulfide bond" evidence="1">
    <location>
        <begin position="66"/>
        <end position="104"/>
    </location>
</feature>
<feature type="disulfide bond" evidence="1">
    <location>
        <begin position="73"/>
        <end position="97"/>
    </location>
</feature>
<feature type="disulfide bond" evidence="1">
    <location>
        <begin position="91"/>
        <end position="102"/>
    </location>
</feature>
<feature type="sequence conflict" description="In Ref. 1; BAA08385." evidence="6" ref="1">
    <location>
        <begin position="39"/>
        <end position="41"/>
    </location>
</feature>
<feature type="sequence conflict" description="In Ref. 2; AA sequence." evidence="6" ref="2">
    <original>S</original>
    <variation>T</variation>
    <location>
        <position position="83"/>
    </location>
</feature>
<feature type="sequence conflict" description="In Ref. 2; AA sequence." evidence="6" ref="2">
    <original>N</original>
    <variation>E</variation>
    <location>
        <position position="86"/>
    </location>
</feature>
<feature type="sequence conflict" description="In Ref. 2; AA sequence." evidence="6" ref="2">
    <original>T</original>
    <variation>S</variation>
    <location>
        <position position="90"/>
    </location>
</feature>
<feature type="sequence conflict" description="In Ref. 2; AA sequence." evidence="6" ref="2">
    <original>EN</original>
    <variation>ND</variation>
    <location>
        <begin position="94"/>
        <end position="95"/>
    </location>
</feature>
<feature type="sequence conflict" description="In Ref. 2; AA sequence." evidence="6" ref="2">
    <original>D</original>
    <variation>N</variation>
    <location>
        <position position="117"/>
    </location>
</feature>
<feature type="sequence conflict" description="In Ref. 2; AA sequence." evidence="6" ref="2">
    <original>N</original>
    <variation>D</variation>
    <location>
        <position position="120"/>
    </location>
</feature>
<feature type="sequence conflict" description="In Ref. 2; AA sequence." evidence="6" ref="2">
    <original>ES</original>
    <variation>SE</variation>
    <location>
        <begin position="135"/>
        <end position="136"/>
    </location>
</feature>
<evidence type="ECO:0000250" key="1"/>
<evidence type="ECO:0000255" key="2">
    <source>
        <dbReference type="PROSITE-ProRule" id="PRU10035"/>
    </source>
</evidence>
<evidence type="ECO:0000255" key="3">
    <source>
        <dbReference type="PROSITE-ProRule" id="PRU10036"/>
    </source>
</evidence>
<evidence type="ECO:0000269" key="4">
    <source>
    </source>
</evidence>
<evidence type="ECO:0000269" key="5">
    <source>
    </source>
</evidence>
<evidence type="ECO:0000305" key="6"/>
<keyword id="KW-0106">Calcium</keyword>
<keyword id="KW-0903">Direct protein sequencing</keyword>
<keyword id="KW-1015">Disulfide bond</keyword>
<keyword id="KW-1199">Hemostasis impairing toxin</keyword>
<keyword id="KW-0378">Hydrolase</keyword>
<keyword id="KW-0442">Lipid degradation</keyword>
<keyword id="KW-0443">Lipid metabolism</keyword>
<keyword id="KW-0479">Metal-binding</keyword>
<keyword id="KW-1201">Platelet aggregation inhibiting toxin</keyword>
<keyword id="KW-0964">Secreted</keyword>
<keyword id="KW-0732">Signal</keyword>
<keyword id="KW-0800">Toxin</keyword>
<name>PA2A1_OVOOK</name>
<dbReference type="EC" id="3.1.1.4"/>
<dbReference type="EMBL" id="D49388">
    <property type="protein sequence ID" value="BAA08383.1"/>
    <property type="molecule type" value="mRNA"/>
</dbReference>
<dbReference type="EMBL" id="D49390">
    <property type="protein sequence ID" value="BAA08385.1"/>
    <property type="status" value="ALT_SEQ"/>
    <property type="molecule type" value="Genomic_DNA"/>
</dbReference>
<dbReference type="PIR" id="JC4874">
    <property type="entry name" value="PSTV"/>
</dbReference>
<dbReference type="SMR" id="P00625"/>
<dbReference type="GO" id="GO:0005576">
    <property type="term" value="C:extracellular region"/>
    <property type="evidence" value="ECO:0000304"/>
    <property type="project" value="UniProtKB"/>
</dbReference>
<dbReference type="GO" id="GO:0043655">
    <property type="term" value="C:host extracellular space"/>
    <property type="evidence" value="ECO:0000304"/>
    <property type="project" value="UniProtKB"/>
</dbReference>
<dbReference type="GO" id="GO:0005509">
    <property type="term" value="F:calcium ion binding"/>
    <property type="evidence" value="ECO:0007669"/>
    <property type="project" value="InterPro"/>
</dbReference>
<dbReference type="GO" id="GO:0047498">
    <property type="term" value="F:calcium-dependent phospholipase A2 activity"/>
    <property type="evidence" value="ECO:0007669"/>
    <property type="project" value="TreeGrafter"/>
</dbReference>
<dbReference type="GO" id="GO:0004623">
    <property type="term" value="F:phospholipase A2 activity"/>
    <property type="evidence" value="ECO:0000314"/>
    <property type="project" value="UniProtKB"/>
</dbReference>
<dbReference type="GO" id="GO:0005543">
    <property type="term" value="F:phospholipid binding"/>
    <property type="evidence" value="ECO:0007669"/>
    <property type="project" value="TreeGrafter"/>
</dbReference>
<dbReference type="GO" id="GO:0090729">
    <property type="term" value="F:toxin activity"/>
    <property type="evidence" value="ECO:0007669"/>
    <property type="project" value="UniProtKB-KW"/>
</dbReference>
<dbReference type="GO" id="GO:0050482">
    <property type="term" value="P:arachidonate secretion"/>
    <property type="evidence" value="ECO:0007669"/>
    <property type="project" value="InterPro"/>
</dbReference>
<dbReference type="GO" id="GO:0016042">
    <property type="term" value="P:lipid catabolic process"/>
    <property type="evidence" value="ECO:0000314"/>
    <property type="project" value="UniProtKB"/>
</dbReference>
<dbReference type="GO" id="GO:0042130">
    <property type="term" value="P:negative regulation of T cell proliferation"/>
    <property type="evidence" value="ECO:0007669"/>
    <property type="project" value="TreeGrafter"/>
</dbReference>
<dbReference type="GO" id="GO:0006644">
    <property type="term" value="P:phospholipid metabolic process"/>
    <property type="evidence" value="ECO:0000314"/>
    <property type="project" value="UniProtKB"/>
</dbReference>
<dbReference type="CDD" id="cd00125">
    <property type="entry name" value="PLA2c"/>
    <property type="match status" value="1"/>
</dbReference>
<dbReference type="FunFam" id="1.20.90.10:FF:000001">
    <property type="entry name" value="Basic phospholipase A2 homolog"/>
    <property type="match status" value="1"/>
</dbReference>
<dbReference type="Gene3D" id="1.20.90.10">
    <property type="entry name" value="Phospholipase A2 domain"/>
    <property type="match status" value="1"/>
</dbReference>
<dbReference type="InterPro" id="IPR001211">
    <property type="entry name" value="PLipase_A2"/>
</dbReference>
<dbReference type="InterPro" id="IPR033112">
    <property type="entry name" value="PLipase_A2_Asp_AS"/>
</dbReference>
<dbReference type="InterPro" id="IPR016090">
    <property type="entry name" value="PLipase_A2_dom"/>
</dbReference>
<dbReference type="InterPro" id="IPR036444">
    <property type="entry name" value="PLipase_A2_dom_sf"/>
</dbReference>
<dbReference type="InterPro" id="IPR033113">
    <property type="entry name" value="PLipase_A2_His_AS"/>
</dbReference>
<dbReference type="PANTHER" id="PTHR11716">
    <property type="entry name" value="PHOSPHOLIPASE A2 FAMILY MEMBER"/>
    <property type="match status" value="1"/>
</dbReference>
<dbReference type="PANTHER" id="PTHR11716:SF9">
    <property type="entry name" value="PHOSPHOLIPASE A2, MEMBRANE ASSOCIATED"/>
    <property type="match status" value="1"/>
</dbReference>
<dbReference type="Pfam" id="PF00068">
    <property type="entry name" value="Phospholip_A2_1"/>
    <property type="match status" value="1"/>
</dbReference>
<dbReference type="PRINTS" id="PR00389">
    <property type="entry name" value="PHPHLIPASEA2"/>
</dbReference>
<dbReference type="SMART" id="SM00085">
    <property type="entry name" value="PA2c"/>
    <property type="match status" value="1"/>
</dbReference>
<dbReference type="SUPFAM" id="SSF48619">
    <property type="entry name" value="Phospholipase A2, PLA2"/>
    <property type="match status" value="1"/>
</dbReference>
<dbReference type="PROSITE" id="PS00119">
    <property type="entry name" value="PA2_ASP"/>
    <property type="match status" value="1"/>
</dbReference>
<dbReference type="PROSITE" id="PS00118">
    <property type="entry name" value="PA2_HIS"/>
    <property type="match status" value="1"/>
</dbReference>
<sequence length="139" mass="15584">MRTLWIMAVLLLGVEGHLMQFETLIMKIAGRSGVWWYGSYGCYCGAGGQGRPQDPSDRCCFVHDCCYGKVTGCNTKDEFYTYSEENGAITCGGENPCLKEVCECDLAAAICFRDNLDTYNSKKYWMFPAKNCLEESEPC</sequence>
<comment type="function">
    <text evidence="1 4">Snake venom phospholipase A2 (PLA2) that inhibits the ADP- and collagen-induced human platelet aggregation (By similarity). Exhibits high hydrolytic activities and preferred the anionic micelles to the zwitterionic micelles. PLA2 catalyzes the calcium-dependent hydrolysis of the 2-acyl groups in 3-sn-phosphoglycerides.</text>
</comment>
<comment type="catalytic activity">
    <reaction evidence="2 3">
        <text>a 1,2-diacyl-sn-glycero-3-phosphocholine + H2O = a 1-acyl-sn-glycero-3-phosphocholine + a fatty acid + H(+)</text>
        <dbReference type="Rhea" id="RHEA:15801"/>
        <dbReference type="ChEBI" id="CHEBI:15377"/>
        <dbReference type="ChEBI" id="CHEBI:15378"/>
        <dbReference type="ChEBI" id="CHEBI:28868"/>
        <dbReference type="ChEBI" id="CHEBI:57643"/>
        <dbReference type="ChEBI" id="CHEBI:58168"/>
        <dbReference type="EC" id="3.1.1.4"/>
    </reaction>
</comment>
<comment type="cofactor">
    <cofactor evidence="1">
        <name>Ca(2+)</name>
        <dbReference type="ChEBI" id="CHEBI:29108"/>
    </cofactor>
    <text evidence="1">Binds 1 Ca(2+) ion.</text>
</comment>
<comment type="subcellular location">
    <subcellularLocation>
        <location>Secreted</location>
    </subcellularLocation>
</comment>
<comment type="tissue specificity">
    <text>Expressed by the venom gland.</text>
</comment>
<comment type="mass spectrometry" mass="13786.0" method="Electrospray" evidence="4"/>
<comment type="similarity">
    <text evidence="6">Belongs to the phospholipase A2 family. Group II subfamily. D49 sub-subfamily.</text>
</comment>